<gene>
    <name evidence="1" type="primary">astD</name>
    <name type="ordered locus">SeSA_A1400</name>
</gene>
<feature type="chain" id="PRO_1000138060" description="N-succinylglutamate 5-semialdehyde dehydrogenase">
    <location>
        <begin position="1"/>
        <end position="492"/>
    </location>
</feature>
<feature type="active site" evidence="1">
    <location>
        <position position="243"/>
    </location>
</feature>
<feature type="active site" evidence="1">
    <location>
        <position position="277"/>
    </location>
</feature>
<feature type="binding site" evidence="1">
    <location>
        <begin position="220"/>
        <end position="225"/>
    </location>
    <ligand>
        <name>NAD(+)</name>
        <dbReference type="ChEBI" id="CHEBI:57540"/>
    </ligand>
</feature>
<proteinExistence type="inferred from homology"/>
<keyword id="KW-0056">Arginine metabolism</keyword>
<keyword id="KW-0520">NAD</keyword>
<keyword id="KW-0560">Oxidoreductase</keyword>
<protein>
    <recommendedName>
        <fullName evidence="1">N-succinylglutamate 5-semialdehyde dehydrogenase</fullName>
        <ecNumber evidence="1">1.2.1.71</ecNumber>
    </recommendedName>
    <alternativeName>
        <fullName evidence="1">Succinylglutamic semialdehyde dehydrogenase</fullName>
        <shortName evidence="1">SGSD</shortName>
    </alternativeName>
</protein>
<organism>
    <name type="scientific">Salmonella schwarzengrund (strain CVM19633)</name>
    <dbReference type="NCBI Taxonomy" id="439843"/>
    <lineage>
        <taxon>Bacteria</taxon>
        <taxon>Pseudomonadati</taxon>
        <taxon>Pseudomonadota</taxon>
        <taxon>Gammaproteobacteria</taxon>
        <taxon>Enterobacterales</taxon>
        <taxon>Enterobacteriaceae</taxon>
        <taxon>Salmonella</taxon>
    </lineage>
</organism>
<reference key="1">
    <citation type="journal article" date="2011" name="J. Bacteriol.">
        <title>Comparative genomics of 28 Salmonella enterica isolates: evidence for CRISPR-mediated adaptive sublineage evolution.</title>
        <authorList>
            <person name="Fricke W.F."/>
            <person name="Mammel M.K."/>
            <person name="McDermott P.F."/>
            <person name="Tartera C."/>
            <person name="White D.G."/>
            <person name="Leclerc J.E."/>
            <person name="Ravel J."/>
            <person name="Cebula T.A."/>
        </authorList>
    </citation>
    <scope>NUCLEOTIDE SEQUENCE [LARGE SCALE GENOMIC DNA]</scope>
    <source>
        <strain>CVM19633</strain>
    </source>
</reference>
<accession>B4TUC3</accession>
<evidence type="ECO:0000255" key="1">
    <source>
        <dbReference type="HAMAP-Rule" id="MF_01174"/>
    </source>
</evidence>
<dbReference type="EC" id="1.2.1.71" evidence="1"/>
<dbReference type="EMBL" id="CP001127">
    <property type="protein sequence ID" value="ACF91196.1"/>
    <property type="molecule type" value="Genomic_DNA"/>
</dbReference>
<dbReference type="RefSeq" id="WP_000177264.1">
    <property type="nucleotide sequence ID" value="NC_011094.1"/>
</dbReference>
<dbReference type="SMR" id="B4TUC3"/>
<dbReference type="KEGG" id="sew:SeSA_A1400"/>
<dbReference type="HOGENOM" id="CLU_005391_1_0_6"/>
<dbReference type="UniPathway" id="UPA00185">
    <property type="reaction ID" value="UER00282"/>
</dbReference>
<dbReference type="Proteomes" id="UP000001865">
    <property type="component" value="Chromosome"/>
</dbReference>
<dbReference type="GO" id="GO:0043824">
    <property type="term" value="F:succinylglutamate-semialdehyde dehydrogenase activity"/>
    <property type="evidence" value="ECO:0007669"/>
    <property type="project" value="UniProtKB-EC"/>
</dbReference>
<dbReference type="GO" id="GO:0019544">
    <property type="term" value="P:arginine catabolic process to glutamate"/>
    <property type="evidence" value="ECO:0007669"/>
    <property type="project" value="UniProtKB-UniRule"/>
</dbReference>
<dbReference type="GO" id="GO:0019545">
    <property type="term" value="P:arginine catabolic process to succinate"/>
    <property type="evidence" value="ECO:0007669"/>
    <property type="project" value="UniProtKB-UniRule"/>
</dbReference>
<dbReference type="CDD" id="cd07095">
    <property type="entry name" value="ALDH_SGSD_AstD"/>
    <property type="match status" value="1"/>
</dbReference>
<dbReference type="FunFam" id="3.40.309.10:FF:000013">
    <property type="entry name" value="N-succinylglutamate 5-semialdehyde dehydrogenase"/>
    <property type="match status" value="1"/>
</dbReference>
<dbReference type="FunFam" id="3.40.605.10:FF:000010">
    <property type="entry name" value="N-succinylglutamate 5-semialdehyde dehydrogenase"/>
    <property type="match status" value="1"/>
</dbReference>
<dbReference type="Gene3D" id="3.40.605.10">
    <property type="entry name" value="Aldehyde Dehydrogenase, Chain A, domain 1"/>
    <property type="match status" value="1"/>
</dbReference>
<dbReference type="Gene3D" id="3.40.309.10">
    <property type="entry name" value="Aldehyde Dehydrogenase, Chain A, domain 2"/>
    <property type="match status" value="1"/>
</dbReference>
<dbReference type="HAMAP" id="MF_01174">
    <property type="entry name" value="Aldedh_AstD"/>
    <property type="match status" value="1"/>
</dbReference>
<dbReference type="InterPro" id="IPR016161">
    <property type="entry name" value="Ald_DH/histidinol_DH"/>
</dbReference>
<dbReference type="InterPro" id="IPR016163">
    <property type="entry name" value="Ald_DH_C"/>
</dbReference>
<dbReference type="InterPro" id="IPR016160">
    <property type="entry name" value="Ald_DH_CS_CYS"/>
</dbReference>
<dbReference type="InterPro" id="IPR029510">
    <property type="entry name" value="Ald_DH_CS_GLU"/>
</dbReference>
<dbReference type="InterPro" id="IPR016162">
    <property type="entry name" value="Ald_DH_N"/>
</dbReference>
<dbReference type="InterPro" id="IPR015590">
    <property type="entry name" value="Aldehyde_DH_dom"/>
</dbReference>
<dbReference type="InterPro" id="IPR017649">
    <property type="entry name" value="SuccinylGlu_semiald_DH_AstD"/>
</dbReference>
<dbReference type="NCBIfam" id="TIGR03240">
    <property type="entry name" value="arg_catab_astD"/>
    <property type="match status" value="1"/>
</dbReference>
<dbReference type="NCBIfam" id="NF006992">
    <property type="entry name" value="PRK09457.1"/>
    <property type="match status" value="1"/>
</dbReference>
<dbReference type="PANTHER" id="PTHR11699">
    <property type="entry name" value="ALDEHYDE DEHYDROGENASE-RELATED"/>
    <property type="match status" value="1"/>
</dbReference>
<dbReference type="Pfam" id="PF00171">
    <property type="entry name" value="Aldedh"/>
    <property type="match status" value="1"/>
</dbReference>
<dbReference type="SUPFAM" id="SSF53720">
    <property type="entry name" value="ALDH-like"/>
    <property type="match status" value="1"/>
</dbReference>
<dbReference type="PROSITE" id="PS00070">
    <property type="entry name" value="ALDEHYDE_DEHYDR_CYS"/>
    <property type="match status" value="1"/>
</dbReference>
<dbReference type="PROSITE" id="PS00687">
    <property type="entry name" value="ALDEHYDE_DEHYDR_GLU"/>
    <property type="match status" value="1"/>
</dbReference>
<comment type="function">
    <text evidence="1">Catalyzes the NAD-dependent reduction of succinylglutamate semialdehyde into succinylglutamate.</text>
</comment>
<comment type="catalytic activity">
    <reaction evidence="1">
        <text>N-succinyl-L-glutamate 5-semialdehyde + NAD(+) + H2O = N-succinyl-L-glutamate + NADH + 2 H(+)</text>
        <dbReference type="Rhea" id="RHEA:10812"/>
        <dbReference type="ChEBI" id="CHEBI:15377"/>
        <dbReference type="ChEBI" id="CHEBI:15378"/>
        <dbReference type="ChEBI" id="CHEBI:57540"/>
        <dbReference type="ChEBI" id="CHEBI:57945"/>
        <dbReference type="ChEBI" id="CHEBI:58520"/>
        <dbReference type="ChEBI" id="CHEBI:58763"/>
        <dbReference type="EC" id="1.2.1.71"/>
    </reaction>
</comment>
<comment type="pathway">
    <text evidence="1">Amino-acid degradation; L-arginine degradation via AST pathway; L-glutamate and succinate from L-arginine: step 4/5.</text>
</comment>
<comment type="similarity">
    <text evidence="1">Belongs to the aldehyde dehydrogenase family. AstD subfamily.</text>
</comment>
<sequence>MTLWINGDWITGQGERRRKTNPVSAEILWQGNDANAAQVAEACQAARAAFPRWAREPFAARQAIVEKFAALLEAHKAELTEVIARETGKPRWEAATEVTAMINKIAISIKAYHARTGEQKSELVDGAATLRHRPHGVLAVFGPYNFPGHLPNGHIVPALLAGNTLIFKPSELTPWTGETVIKLWERAGLPAGVLNLVQGGRETGQALSSLDDLDGLLFTGSASTGYQLHRQLSGQPEKILALEMGGNNPLIIEDAANMDAAVHLTLQSAFITAGQRCTCARRLLVKQGAQGDAFLARLVDVAGRLQPGRWDDDPQPFIGGLISAQAAQHVMEAWRQREALGGRTLLVPRKVKEGTSLLTPGIIELTGVTDVPDEEVFGPLLNVWRYAHFDEAIRLANNTRFGLSCGLVSTDRAQFEQLLLEARAGIVNWNKPLTGAASTAPFGGVGASGNHRPSAWYAADYCAWPMASLESPELTLPATLSPGLDFSRREAV</sequence>
<name>ASTD_SALSV</name>